<feature type="chain" id="PRO_1000184502" description="ATP synthase subunit c">
    <location>
        <begin position="1"/>
        <end position="70"/>
    </location>
</feature>
<feature type="transmembrane region" description="Helical" evidence="1">
    <location>
        <begin position="4"/>
        <end position="24"/>
    </location>
</feature>
<feature type="transmembrane region" description="Helical" evidence="1">
    <location>
        <begin position="45"/>
        <end position="65"/>
    </location>
</feature>
<feature type="site" description="Reversibly protonated during proton transport" evidence="1">
    <location>
        <position position="54"/>
    </location>
</feature>
<reference key="1">
    <citation type="journal article" date="2001" name="Lancet">
        <title>Whole genome sequencing of meticillin-resistant Staphylococcus aureus.</title>
        <authorList>
            <person name="Kuroda M."/>
            <person name="Ohta T."/>
            <person name="Uchiyama I."/>
            <person name="Baba T."/>
            <person name="Yuzawa H."/>
            <person name="Kobayashi I."/>
            <person name="Cui L."/>
            <person name="Oguchi A."/>
            <person name="Aoki K."/>
            <person name="Nagai Y."/>
            <person name="Lian J.-Q."/>
            <person name="Ito T."/>
            <person name="Kanamori M."/>
            <person name="Matsumaru H."/>
            <person name="Maruyama A."/>
            <person name="Murakami H."/>
            <person name="Hosoyama A."/>
            <person name="Mizutani-Ui Y."/>
            <person name="Takahashi N.K."/>
            <person name="Sawano T."/>
            <person name="Inoue R."/>
            <person name="Kaito C."/>
            <person name="Sekimizu K."/>
            <person name="Hirakawa H."/>
            <person name="Kuhara S."/>
            <person name="Goto S."/>
            <person name="Yabuzaki J."/>
            <person name="Kanehisa M."/>
            <person name="Yamashita A."/>
            <person name="Oshima K."/>
            <person name="Furuya K."/>
            <person name="Yoshino C."/>
            <person name="Shiba T."/>
            <person name="Hattori M."/>
            <person name="Ogasawara N."/>
            <person name="Hayashi H."/>
            <person name="Hiramatsu K."/>
        </authorList>
    </citation>
    <scope>NUCLEOTIDE SEQUENCE [LARGE SCALE GENOMIC DNA]</scope>
    <source>
        <strain>N315</strain>
    </source>
</reference>
<evidence type="ECO:0000255" key="1">
    <source>
        <dbReference type="HAMAP-Rule" id="MF_01396"/>
    </source>
</evidence>
<organism>
    <name type="scientific">Staphylococcus aureus (strain N315)</name>
    <dbReference type="NCBI Taxonomy" id="158879"/>
    <lineage>
        <taxon>Bacteria</taxon>
        <taxon>Bacillati</taxon>
        <taxon>Bacillota</taxon>
        <taxon>Bacilli</taxon>
        <taxon>Bacillales</taxon>
        <taxon>Staphylococcaceae</taxon>
        <taxon>Staphylococcus</taxon>
    </lineage>
</organism>
<accession>Q7A4E6</accession>
<name>ATPL_STAAN</name>
<dbReference type="EMBL" id="BA000018">
    <property type="protein sequence ID" value="BAB43194.1"/>
    <property type="molecule type" value="Genomic_DNA"/>
</dbReference>
<dbReference type="PIR" id="A90004">
    <property type="entry name" value="A90004"/>
</dbReference>
<dbReference type="RefSeq" id="WP_001048816.1">
    <property type="nucleotide sequence ID" value="NC_002745.2"/>
</dbReference>
<dbReference type="SMR" id="Q7A4E6"/>
<dbReference type="EnsemblBacteria" id="BAB43194">
    <property type="protein sequence ID" value="BAB43194"/>
    <property type="gene ID" value="BAB43194"/>
</dbReference>
<dbReference type="GeneID" id="98346415"/>
<dbReference type="KEGG" id="sau:SA1910"/>
<dbReference type="HOGENOM" id="CLU_148047_1_1_9"/>
<dbReference type="GO" id="GO:0005886">
    <property type="term" value="C:plasma membrane"/>
    <property type="evidence" value="ECO:0007669"/>
    <property type="project" value="UniProtKB-SubCell"/>
</dbReference>
<dbReference type="GO" id="GO:0045259">
    <property type="term" value="C:proton-transporting ATP synthase complex"/>
    <property type="evidence" value="ECO:0007669"/>
    <property type="project" value="UniProtKB-KW"/>
</dbReference>
<dbReference type="GO" id="GO:0033177">
    <property type="term" value="C:proton-transporting two-sector ATPase complex, proton-transporting domain"/>
    <property type="evidence" value="ECO:0007669"/>
    <property type="project" value="InterPro"/>
</dbReference>
<dbReference type="GO" id="GO:0008289">
    <property type="term" value="F:lipid binding"/>
    <property type="evidence" value="ECO:0007669"/>
    <property type="project" value="UniProtKB-KW"/>
</dbReference>
<dbReference type="GO" id="GO:0046933">
    <property type="term" value="F:proton-transporting ATP synthase activity, rotational mechanism"/>
    <property type="evidence" value="ECO:0007669"/>
    <property type="project" value="UniProtKB-UniRule"/>
</dbReference>
<dbReference type="CDD" id="cd18185">
    <property type="entry name" value="ATP-synt_Fo_c_ATPE"/>
    <property type="match status" value="1"/>
</dbReference>
<dbReference type="FunFam" id="1.20.20.10:FF:000004">
    <property type="entry name" value="ATP synthase subunit c"/>
    <property type="match status" value="1"/>
</dbReference>
<dbReference type="Gene3D" id="1.20.20.10">
    <property type="entry name" value="F1F0 ATP synthase subunit C"/>
    <property type="match status" value="1"/>
</dbReference>
<dbReference type="HAMAP" id="MF_01396">
    <property type="entry name" value="ATP_synth_c_bact"/>
    <property type="match status" value="1"/>
</dbReference>
<dbReference type="InterPro" id="IPR005953">
    <property type="entry name" value="ATP_synth_csu_bac/chlpt"/>
</dbReference>
<dbReference type="InterPro" id="IPR000454">
    <property type="entry name" value="ATP_synth_F0_csu"/>
</dbReference>
<dbReference type="InterPro" id="IPR020537">
    <property type="entry name" value="ATP_synth_F0_csu_DDCD_BS"/>
</dbReference>
<dbReference type="InterPro" id="IPR038662">
    <property type="entry name" value="ATP_synth_F0_csu_sf"/>
</dbReference>
<dbReference type="InterPro" id="IPR002379">
    <property type="entry name" value="ATPase_proteolipid_c-like_dom"/>
</dbReference>
<dbReference type="InterPro" id="IPR035921">
    <property type="entry name" value="F/V-ATP_Csub_sf"/>
</dbReference>
<dbReference type="NCBIfam" id="TIGR01260">
    <property type="entry name" value="ATP_synt_c"/>
    <property type="match status" value="1"/>
</dbReference>
<dbReference type="NCBIfam" id="NF005363">
    <property type="entry name" value="PRK06876.1"/>
    <property type="match status" value="1"/>
</dbReference>
<dbReference type="Pfam" id="PF00137">
    <property type="entry name" value="ATP-synt_C"/>
    <property type="match status" value="1"/>
</dbReference>
<dbReference type="PRINTS" id="PR00124">
    <property type="entry name" value="ATPASEC"/>
</dbReference>
<dbReference type="SUPFAM" id="SSF81333">
    <property type="entry name" value="F1F0 ATP synthase subunit C"/>
    <property type="match status" value="1"/>
</dbReference>
<dbReference type="PROSITE" id="PS00605">
    <property type="entry name" value="ATPASE_C"/>
    <property type="match status" value="1"/>
</dbReference>
<comment type="function">
    <text evidence="1">F(1)F(0) ATP synthase produces ATP from ADP in the presence of a proton or sodium gradient. F-type ATPases consist of two structural domains, F(1) containing the extramembraneous catalytic core and F(0) containing the membrane proton channel, linked together by a central stalk and a peripheral stalk. During catalysis, ATP synthesis in the catalytic domain of F(1) is coupled via a rotary mechanism of the central stalk subunits to proton translocation.</text>
</comment>
<comment type="function">
    <text evidence="1">Key component of the F(0) channel; it plays a direct role in translocation across the membrane. A homomeric c-ring of between 10-14 subunits forms the central stalk rotor element with the F(1) delta and epsilon subunits.</text>
</comment>
<comment type="subunit">
    <text evidence="1">F-type ATPases have 2 components, F(1) - the catalytic core - and F(0) - the membrane proton channel. F(1) has five subunits: alpha(3), beta(3), gamma(1), delta(1), epsilon(1). F(0) has three main subunits: a(1), b(2) and c(10-14). The alpha and beta chains form an alternating ring which encloses part of the gamma chain. F(1) is attached to F(0) by a central stalk formed by the gamma and epsilon chains, while a peripheral stalk is formed by the delta and b chains.</text>
</comment>
<comment type="subcellular location">
    <subcellularLocation>
        <location evidence="1">Cell membrane</location>
        <topology evidence="1">Multi-pass membrane protein</topology>
    </subcellularLocation>
</comment>
<comment type="similarity">
    <text evidence="1">Belongs to the ATPase C chain family.</text>
</comment>
<keyword id="KW-0066">ATP synthesis</keyword>
<keyword id="KW-1003">Cell membrane</keyword>
<keyword id="KW-0138">CF(0)</keyword>
<keyword id="KW-0375">Hydrogen ion transport</keyword>
<keyword id="KW-0406">Ion transport</keyword>
<keyword id="KW-0446">Lipid-binding</keyword>
<keyword id="KW-0472">Membrane</keyword>
<keyword id="KW-0812">Transmembrane</keyword>
<keyword id="KW-1133">Transmembrane helix</keyword>
<keyword id="KW-0813">Transport</keyword>
<gene>
    <name evidence="1" type="primary">atpE</name>
    <name type="ordered locus">SA1910</name>
</gene>
<protein>
    <recommendedName>
        <fullName evidence="1">ATP synthase subunit c</fullName>
    </recommendedName>
    <alternativeName>
        <fullName evidence="1">ATP synthase F(0) sector subunit c</fullName>
    </alternativeName>
    <alternativeName>
        <fullName evidence="1">F-type ATPase subunit c</fullName>
        <shortName evidence="1">F-ATPase subunit c</shortName>
    </alternativeName>
    <alternativeName>
        <fullName evidence="1">Lipid-binding protein</fullName>
    </alternativeName>
</protein>
<sequence>MNLIAAAIAIGLSALGAGIGNGLIVSRTVEGVARQPEARGQLMGIMFIGVGLVEALPIIGVVIAFMTFAG</sequence>
<proteinExistence type="inferred from homology"/>